<feature type="chain" id="PRO_0000213873" description="Sorting nexin-24">
    <location>
        <begin position="1"/>
        <end position="169"/>
    </location>
</feature>
<feature type="domain" description="PX" evidence="3">
    <location>
        <begin position="1"/>
        <end position="125"/>
    </location>
</feature>
<feature type="binding site" evidence="1">
    <location>
        <position position="38"/>
    </location>
    <ligand>
        <name>a 1,2-diacyl-sn-glycero-3-phospho-(1D-myo-inositol-3-phosphate)</name>
        <dbReference type="ChEBI" id="CHEBI:58088"/>
    </ligand>
</feature>
<feature type="binding site" evidence="1">
    <location>
        <position position="40"/>
    </location>
    <ligand>
        <name>a 1,2-diacyl-sn-glycero-3-phospho-(1D-myo-inositol-3-phosphate)</name>
        <dbReference type="ChEBI" id="CHEBI:58088"/>
    </ligand>
</feature>
<feature type="binding site" evidence="1">
    <location>
        <position position="61"/>
    </location>
    <ligand>
        <name>a 1,2-diacyl-sn-glycero-3-phospho-(1D-myo-inositol-3-phosphate)</name>
        <dbReference type="ChEBI" id="CHEBI:58088"/>
    </ligand>
</feature>
<feature type="binding site" evidence="1">
    <location>
        <position position="74"/>
    </location>
    <ligand>
        <name>a 1,2-diacyl-sn-glycero-3-phospho-(1D-myo-inositol-3-phosphate)</name>
        <dbReference type="ChEBI" id="CHEBI:58088"/>
    </ligand>
</feature>
<feature type="modified residue" description="N-acetylmethionine" evidence="2">
    <location>
        <position position="1"/>
    </location>
</feature>
<feature type="modified residue" description="Phosphoserine" evidence="6">
    <location>
        <position position="113"/>
    </location>
</feature>
<feature type="modified residue" description="Phosphoserine" evidence="5 6">
    <location>
        <position position="116"/>
    </location>
</feature>
<evidence type="ECO:0000250" key="1"/>
<evidence type="ECO:0000250" key="2">
    <source>
        <dbReference type="UniProtKB" id="Q9Y343"/>
    </source>
</evidence>
<evidence type="ECO:0000255" key="3">
    <source>
        <dbReference type="PROSITE-ProRule" id="PRU00147"/>
    </source>
</evidence>
<evidence type="ECO:0000305" key="4"/>
<evidence type="ECO:0007744" key="5">
    <source>
    </source>
</evidence>
<evidence type="ECO:0007744" key="6">
    <source>
    </source>
</evidence>
<gene>
    <name type="primary">Snx24</name>
</gene>
<proteinExistence type="evidence at protein level"/>
<dbReference type="EMBL" id="AK012711">
    <property type="protein sequence ID" value="BAB28427.1"/>
    <property type="molecule type" value="mRNA"/>
</dbReference>
<dbReference type="EMBL" id="AK017610">
    <property type="protein sequence ID" value="BAB30838.1"/>
    <property type="molecule type" value="mRNA"/>
</dbReference>
<dbReference type="EMBL" id="BC051168">
    <property type="protein sequence ID" value="AAH51168.1"/>
    <property type="molecule type" value="mRNA"/>
</dbReference>
<dbReference type="CCDS" id="CCDS29251.1"/>
<dbReference type="RefSeq" id="NP_001357690.1">
    <property type="nucleotide sequence ID" value="NM_001370761.1"/>
</dbReference>
<dbReference type="RefSeq" id="NP_083670.1">
    <property type="nucleotide sequence ID" value="NM_029394.4"/>
</dbReference>
<dbReference type="SMR" id="Q9CRB0"/>
<dbReference type="FunCoup" id="Q9CRB0">
    <property type="interactions" value="36"/>
</dbReference>
<dbReference type="STRING" id="10090.ENSMUSP00000131423"/>
<dbReference type="iPTMnet" id="Q9CRB0"/>
<dbReference type="PhosphoSitePlus" id="Q9CRB0"/>
<dbReference type="jPOST" id="Q9CRB0"/>
<dbReference type="PaxDb" id="10090-ENSMUSP00000131423"/>
<dbReference type="PeptideAtlas" id="Q9CRB0"/>
<dbReference type="ProteomicsDB" id="261469"/>
<dbReference type="Pumba" id="Q9CRB0"/>
<dbReference type="Antibodypedia" id="25654">
    <property type="antibodies" value="166 antibodies from 22 providers"/>
</dbReference>
<dbReference type="DNASU" id="69226"/>
<dbReference type="Ensembl" id="ENSMUST00000025417.9">
    <property type="protein sequence ID" value="ENSMUSP00000025417.9"/>
    <property type="gene ID" value="ENSMUSG00000024535.17"/>
</dbReference>
<dbReference type="Ensembl" id="ENSMUST00000165032.9">
    <property type="protein sequence ID" value="ENSMUSP00000131423.2"/>
    <property type="gene ID" value="ENSMUSG00000024535.17"/>
</dbReference>
<dbReference type="GeneID" id="69226"/>
<dbReference type="KEGG" id="mmu:69226"/>
<dbReference type="UCSC" id="uc008exs.1">
    <property type="organism name" value="mouse"/>
</dbReference>
<dbReference type="AGR" id="MGI:1916476"/>
<dbReference type="CTD" id="28966"/>
<dbReference type="MGI" id="MGI:1916476">
    <property type="gene designation" value="Snx24"/>
</dbReference>
<dbReference type="VEuPathDB" id="HostDB:ENSMUSG00000024535"/>
<dbReference type="eggNOG" id="KOG2101">
    <property type="taxonomic scope" value="Eukaryota"/>
</dbReference>
<dbReference type="GeneTree" id="ENSGT00390000001280"/>
<dbReference type="HOGENOM" id="CLU_117250_1_0_1"/>
<dbReference type="InParanoid" id="Q9CRB0"/>
<dbReference type="OMA" id="RYSTFHA"/>
<dbReference type="OrthoDB" id="93876at2759"/>
<dbReference type="PhylomeDB" id="Q9CRB0"/>
<dbReference type="TreeFam" id="TF332414"/>
<dbReference type="BioGRID-ORCS" id="69226">
    <property type="hits" value="2 hits in 78 CRISPR screens"/>
</dbReference>
<dbReference type="ChiTaRS" id="Snx24">
    <property type="organism name" value="mouse"/>
</dbReference>
<dbReference type="PRO" id="PR:Q9CRB0"/>
<dbReference type="Proteomes" id="UP000000589">
    <property type="component" value="Chromosome 18"/>
</dbReference>
<dbReference type="RNAct" id="Q9CRB0">
    <property type="molecule type" value="protein"/>
</dbReference>
<dbReference type="Bgee" id="ENSMUSG00000024535">
    <property type="expression patterns" value="Expressed in stroma of bone marrow and 213 other cell types or tissues"/>
</dbReference>
<dbReference type="GO" id="GO:0030659">
    <property type="term" value="C:cytoplasmic vesicle membrane"/>
    <property type="evidence" value="ECO:0007669"/>
    <property type="project" value="UniProtKB-SubCell"/>
</dbReference>
<dbReference type="GO" id="GO:0032266">
    <property type="term" value="F:phosphatidylinositol-3-phosphate binding"/>
    <property type="evidence" value="ECO:0000314"/>
    <property type="project" value="UniProtKB"/>
</dbReference>
<dbReference type="GO" id="GO:0070273">
    <property type="term" value="F:phosphatidylinositol-4-phosphate binding"/>
    <property type="evidence" value="ECO:0000314"/>
    <property type="project" value="UniProtKB"/>
</dbReference>
<dbReference type="GO" id="GO:0010314">
    <property type="term" value="F:phosphatidylinositol-5-phosphate binding"/>
    <property type="evidence" value="ECO:0000314"/>
    <property type="project" value="UniProtKB"/>
</dbReference>
<dbReference type="GO" id="GO:0015031">
    <property type="term" value="P:protein transport"/>
    <property type="evidence" value="ECO:0007669"/>
    <property type="project" value="UniProtKB-KW"/>
</dbReference>
<dbReference type="CDD" id="cd06880">
    <property type="entry name" value="PX_SNX22"/>
    <property type="match status" value="1"/>
</dbReference>
<dbReference type="FunFam" id="3.30.1520.10:FF:000038">
    <property type="entry name" value="sorting nexin-24"/>
    <property type="match status" value="1"/>
</dbReference>
<dbReference type="Gene3D" id="3.30.1520.10">
    <property type="entry name" value="Phox-like domain"/>
    <property type="match status" value="1"/>
</dbReference>
<dbReference type="InterPro" id="IPR001683">
    <property type="entry name" value="PX_dom"/>
</dbReference>
<dbReference type="InterPro" id="IPR036871">
    <property type="entry name" value="PX_dom_sf"/>
</dbReference>
<dbReference type="InterPro" id="IPR052467">
    <property type="entry name" value="Sorting_nexin_PX-domain"/>
</dbReference>
<dbReference type="PANTHER" id="PTHR15813">
    <property type="entry name" value="SORTING NEXIN-22 AND 24"/>
    <property type="match status" value="1"/>
</dbReference>
<dbReference type="PANTHER" id="PTHR15813:SF10">
    <property type="entry name" value="SORTING NEXIN-24"/>
    <property type="match status" value="1"/>
</dbReference>
<dbReference type="Pfam" id="PF00787">
    <property type="entry name" value="PX"/>
    <property type="match status" value="1"/>
</dbReference>
<dbReference type="SMART" id="SM00312">
    <property type="entry name" value="PX"/>
    <property type="match status" value="1"/>
</dbReference>
<dbReference type="SUPFAM" id="SSF64268">
    <property type="entry name" value="PX domain"/>
    <property type="match status" value="1"/>
</dbReference>
<dbReference type="PROSITE" id="PS50195">
    <property type="entry name" value="PX"/>
    <property type="match status" value="1"/>
</dbReference>
<protein>
    <recommendedName>
        <fullName>Sorting nexin-24</fullName>
    </recommendedName>
</protein>
<comment type="function">
    <text evidence="1">May be involved in several stages of intracellular trafficking.</text>
</comment>
<comment type="subcellular location">
    <subcellularLocation>
        <location evidence="1">Cytoplasmic vesicle membrane</location>
        <topology evidence="1">Peripheral membrane protein</topology>
        <orientation evidence="1">Cytoplasmic side</orientation>
    </subcellularLocation>
</comment>
<comment type="domain">
    <text evidence="1">The PX domain mediates specific binding to membranes enriched in phosphatidylinositol 3-phosphate (PtdIns(P3)).</text>
</comment>
<comment type="similarity">
    <text evidence="4">Belongs to the sorting nexin family.</text>
</comment>
<accession>Q9CRB0</accession>
<keyword id="KW-0007">Acetylation</keyword>
<keyword id="KW-0968">Cytoplasmic vesicle</keyword>
<keyword id="KW-0446">Lipid-binding</keyword>
<keyword id="KW-0472">Membrane</keyword>
<keyword id="KW-0597">Phosphoprotein</keyword>
<keyword id="KW-0653">Protein transport</keyword>
<keyword id="KW-1185">Reference proteome</keyword>
<keyword id="KW-0813">Transport</keyword>
<name>SNX24_MOUSE</name>
<organism>
    <name type="scientific">Mus musculus</name>
    <name type="common">Mouse</name>
    <dbReference type="NCBI Taxonomy" id="10090"/>
    <lineage>
        <taxon>Eukaryota</taxon>
        <taxon>Metazoa</taxon>
        <taxon>Chordata</taxon>
        <taxon>Craniata</taxon>
        <taxon>Vertebrata</taxon>
        <taxon>Euteleostomi</taxon>
        <taxon>Mammalia</taxon>
        <taxon>Eutheria</taxon>
        <taxon>Euarchontoglires</taxon>
        <taxon>Glires</taxon>
        <taxon>Rodentia</taxon>
        <taxon>Myomorpha</taxon>
        <taxon>Muroidea</taxon>
        <taxon>Muridae</taxon>
        <taxon>Murinae</taxon>
        <taxon>Mus</taxon>
        <taxon>Mus</taxon>
    </lineage>
</organism>
<sequence>MEVYIPSFRHEDSDLERGYTVFKIEVLMNGRKHFVEKRYSEFHALHKKLKKCIKTPEIPSKHVRNWVPKVLEQRRQGLETYLQAVILENEELPKLFLDFLNVRHLPSLPKAESCGSFDETESEESSKLSHQPVLLFLGDPYVLPAASDFPNVVIEGVLHGIFFSHLQPR</sequence>
<reference key="1">
    <citation type="journal article" date="2005" name="Science">
        <title>The transcriptional landscape of the mammalian genome.</title>
        <authorList>
            <person name="Carninci P."/>
            <person name="Kasukawa T."/>
            <person name="Katayama S."/>
            <person name="Gough J."/>
            <person name="Frith M.C."/>
            <person name="Maeda N."/>
            <person name="Oyama R."/>
            <person name="Ravasi T."/>
            <person name="Lenhard B."/>
            <person name="Wells C."/>
            <person name="Kodzius R."/>
            <person name="Shimokawa K."/>
            <person name="Bajic V.B."/>
            <person name="Brenner S.E."/>
            <person name="Batalov S."/>
            <person name="Forrest A.R."/>
            <person name="Zavolan M."/>
            <person name="Davis M.J."/>
            <person name="Wilming L.G."/>
            <person name="Aidinis V."/>
            <person name="Allen J.E."/>
            <person name="Ambesi-Impiombato A."/>
            <person name="Apweiler R."/>
            <person name="Aturaliya R.N."/>
            <person name="Bailey T.L."/>
            <person name="Bansal M."/>
            <person name="Baxter L."/>
            <person name="Beisel K.W."/>
            <person name="Bersano T."/>
            <person name="Bono H."/>
            <person name="Chalk A.M."/>
            <person name="Chiu K.P."/>
            <person name="Choudhary V."/>
            <person name="Christoffels A."/>
            <person name="Clutterbuck D.R."/>
            <person name="Crowe M.L."/>
            <person name="Dalla E."/>
            <person name="Dalrymple B.P."/>
            <person name="de Bono B."/>
            <person name="Della Gatta G."/>
            <person name="di Bernardo D."/>
            <person name="Down T."/>
            <person name="Engstrom P."/>
            <person name="Fagiolini M."/>
            <person name="Faulkner G."/>
            <person name="Fletcher C.F."/>
            <person name="Fukushima T."/>
            <person name="Furuno M."/>
            <person name="Futaki S."/>
            <person name="Gariboldi M."/>
            <person name="Georgii-Hemming P."/>
            <person name="Gingeras T.R."/>
            <person name="Gojobori T."/>
            <person name="Green R.E."/>
            <person name="Gustincich S."/>
            <person name="Harbers M."/>
            <person name="Hayashi Y."/>
            <person name="Hensch T.K."/>
            <person name="Hirokawa N."/>
            <person name="Hill D."/>
            <person name="Huminiecki L."/>
            <person name="Iacono M."/>
            <person name="Ikeo K."/>
            <person name="Iwama A."/>
            <person name="Ishikawa T."/>
            <person name="Jakt M."/>
            <person name="Kanapin A."/>
            <person name="Katoh M."/>
            <person name="Kawasawa Y."/>
            <person name="Kelso J."/>
            <person name="Kitamura H."/>
            <person name="Kitano H."/>
            <person name="Kollias G."/>
            <person name="Krishnan S.P."/>
            <person name="Kruger A."/>
            <person name="Kummerfeld S.K."/>
            <person name="Kurochkin I.V."/>
            <person name="Lareau L.F."/>
            <person name="Lazarevic D."/>
            <person name="Lipovich L."/>
            <person name="Liu J."/>
            <person name="Liuni S."/>
            <person name="McWilliam S."/>
            <person name="Madan Babu M."/>
            <person name="Madera M."/>
            <person name="Marchionni L."/>
            <person name="Matsuda H."/>
            <person name="Matsuzawa S."/>
            <person name="Miki H."/>
            <person name="Mignone F."/>
            <person name="Miyake S."/>
            <person name="Morris K."/>
            <person name="Mottagui-Tabar S."/>
            <person name="Mulder N."/>
            <person name="Nakano N."/>
            <person name="Nakauchi H."/>
            <person name="Ng P."/>
            <person name="Nilsson R."/>
            <person name="Nishiguchi S."/>
            <person name="Nishikawa S."/>
            <person name="Nori F."/>
            <person name="Ohara O."/>
            <person name="Okazaki Y."/>
            <person name="Orlando V."/>
            <person name="Pang K.C."/>
            <person name="Pavan W.J."/>
            <person name="Pavesi G."/>
            <person name="Pesole G."/>
            <person name="Petrovsky N."/>
            <person name="Piazza S."/>
            <person name="Reed J."/>
            <person name="Reid J.F."/>
            <person name="Ring B.Z."/>
            <person name="Ringwald M."/>
            <person name="Rost B."/>
            <person name="Ruan Y."/>
            <person name="Salzberg S.L."/>
            <person name="Sandelin A."/>
            <person name="Schneider C."/>
            <person name="Schoenbach C."/>
            <person name="Sekiguchi K."/>
            <person name="Semple C.A."/>
            <person name="Seno S."/>
            <person name="Sessa L."/>
            <person name="Sheng Y."/>
            <person name="Shibata Y."/>
            <person name="Shimada H."/>
            <person name="Shimada K."/>
            <person name="Silva D."/>
            <person name="Sinclair B."/>
            <person name="Sperling S."/>
            <person name="Stupka E."/>
            <person name="Sugiura K."/>
            <person name="Sultana R."/>
            <person name="Takenaka Y."/>
            <person name="Taki K."/>
            <person name="Tammoja K."/>
            <person name="Tan S.L."/>
            <person name="Tang S."/>
            <person name="Taylor M.S."/>
            <person name="Tegner J."/>
            <person name="Teichmann S.A."/>
            <person name="Ueda H.R."/>
            <person name="van Nimwegen E."/>
            <person name="Verardo R."/>
            <person name="Wei C.L."/>
            <person name="Yagi K."/>
            <person name="Yamanishi H."/>
            <person name="Zabarovsky E."/>
            <person name="Zhu S."/>
            <person name="Zimmer A."/>
            <person name="Hide W."/>
            <person name="Bult C."/>
            <person name="Grimmond S.M."/>
            <person name="Teasdale R.D."/>
            <person name="Liu E.T."/>
            <person name="Brusic V."/>
            <person name="Quackenbush J."/>
            <person name="Wahlestedt C."/>
            <person name="Mattick J.S."/>
            <person name="Hume D.A."/>
            <person name="Kai C."/>
            <person name="Sasaki D."/>
            <person name="Tomaru Y."/>
            <person name="Fukuda S."/>
            <person name="Kanamori-Katayama M."/>
            <person name="Suzuki M."/>
            <person name="Aoki J."/>
            <person name="Arakawa T."/>
            <person name="Iida J."/>
            <person name="Imamura K."/>
            <person name="Itoh M."/>
            <person name="Kato T."/>
            <person name="Kawaji H."/>
            <person name="Kawagashira N."/>
            <person name="Kawashima T."/>
            <person name="Kojima M."/>
            <person name="Kondo S."/>
            <person name="Konno H."/>
            <person name="Nakano K."/>
            <person name="Ninomiya N."/>
            <person name="Nishio T."/>
            <person name="Okada M."/>
            <person name="Plessy C."/>
            <person name="Shibata K."/>
            <person name="Shiraki T."/>
            <person name="Suzuki S."/>
            <person name="Tagami M."/>
            <person name="Waki K."/>
            <person name="Watahiki A."/>
            <person name="Okamura-Oho Y."/>
            <person name="Suzuki H."/>
            <person name="Kawai J."/>
            <person name="Hayashizaki Y."/>
        </authorList>
    </citation>
    <scope>NUCLEOTIDE SEQUENCE [LARGE SCALE MRNA]</scope>
    <source>
        <strain>C57BL/6J</strain>
        <tissue>Embryo</tissue>
    </source>
</reference>
<reference key="2">
    <citation type="journal article" date="2004" name="Genome Res.">
        <title>The status, quality, and expansion of the NIH full-length cDNA project: the Mammalian Gene Collection (MGC).</title>
        <authorList>
            <consortium name="The MGC Project Team"/>
        </authorList>
    </citation>
    <scope>NUCLEOTIDE SEQUENCE [LARGE SCALE MRNA]</scope>
    <source>
        <tissue>Olfactory epithelium</tissue>
    </source>
</reference>
<reference key="3">
    <citation type="journal article" date="2007" name="Proc. Natl. Acad. Sci. U.S.A.">
        <title>Large-scale phosphorylation analysis of mouse liver.</title>
        <authorList>
            <person name="Villen J."/>
            <person name="Beausoleil S.A."/>
            <person name="Gerber S.A."/>
            <person name="Gygi S.P."/>
        </authorList>
    </citation>
    <scope>PHOSPHORYLATION [LARGE SCALE ANALYSIS] AT SER-116</scope>
    <scope>IDENTIFICATION BY MASS SPECTROMETRY [LARGE SCALE ANALYSIS]</scope>
    <source>
        <tissue>Liver</tissue>
    </source>
</reference>
<reference key="4">
    <citation type="journal article" date="2010" name="Cell">
        <title>A tissue-specific atlas of mouse protein phosphorylation and expression.</title>
        <authorList>
            <person name="Huttlin E.L."/>
            <person name="Jedrychowski M.P."/>
            <person name="Elias J.E."/>
            <person name="Goswami T."/>
            <person name="Rad R."/>
            <person name="Beausoleil S.A."/>
            <person name="Villen J."/>
            <person name="Haas W."/>
            <person name="Sowa M.E."/>
            <person name="Gygi S.P."/>
        </authorList>
    </citation>
    <scope>PHOSPHORYLATION [LARGE SCALE ANALYSIS] AT SER-113 AND SER-116</scope>
    <scope>IDENTIFICATION BY MASS SPECTROMETRY [LARGE SCALE ANALYSIS]</scope>
    <source>
        <tissue>Brain</tissue>
        <tissue>Heart</tissue>
        <tissue>Kidney</tissue>
        <tissue>Liver</tissue>
    </source>
</reference>